<organism>
    <name type="scientific">Serratia proteamaculans (strain 568)</name>
    <dbReference type="NCBI Taxonomy" id="399741"/>
    <lineage>
        <taxon>Bacteria</taxon>
        <taxon>Pseudomonadati</taxon>
        <taxon>Pseudomonadota</taxon>
        <taxon>Gammaproteobacteria</taxon>
        <taxon>Enterobacterales</taxon>
        <taxon>Yersiniaceae</taxon>
        <taxon>Serratia</taxon>
    </lineage>
</organism>
<sequence length="367" mass="41806">MNRLALYCRQGFEKECAAEITAKAAELEVFGFARVKDNSGYVLFECYQPDDADRLAKEIPFRELIFARQILVVGELLRDLPPEDRVSPIVGMLIGVVDRGGELRVEVPDTNESKELLKFCRKLTVPLRTAMREQKVLMARENKTRPVVHVFFIAPGCCYVGYSFSNNNSPFYMGIPRLKFPSDAPSRSTLKLEEAFHVFIPADEWDERLASGMHAVDLGACPGGWTYQLVQRSMMVHAVDNGPMAPSLMDTGQVTHHRADGFRYEPSSSKIYWLVCDMVEKPAKVTSLMIQWLVKGWCREAIFNLKLPMKKRYEEVSQNLLAIKEALDTAGISSEIHAKQLYHDREEVTVHVRRMWSAVAGRRDERD</sequence>
<evidence type="ECO:0000255" key="1">
    <source>
        <dbReference type="HAMAP-Rule" id="MF_01551"/>
    </source>
</evidence>
<name>RLMM_SERP5</name>
<proteinExistence type="inferred from homology"/>
<protein>
    <recommendedName>
        <fullName evidence="1">Ribosomal RNA large subunit methyltransferase M</fullName>
        <ecNumber evidence="1">2.1.1.186</ecNumber>
    </recommendedName>
    <alternativeName>
        <fullName evidence="1">23S rRNA (cytidine2498-2'-O)-methyltransferase</fullName>
    </alternativeName>
    <alternativeName>
        <fullName evidence="1">23S rRNA 2'-O-ribose methyltransferase RlmM</fullName>
    </alternativeName>
</protein>
<feature type="chain" id="PRO_1000073564" description="Ribosomal RNA large subunit methyltransferase M">
    <location>
        <begin position="1"/>
        <end position="367"/>
    </location>
</feature>
<feature type="active site" description="Proton acceptor" evidence="1">
    <location>
        <position position="306"/>
    </location>
</feature>
<feature type="binding site" evidence="1">
    <location>
        <position position="188"/>
    </location>
    <ligand>
        <name>S-adenosyl-L-methionine</name>
        <dbReference type="ChEBI" id="CHEBI:59789"/>
    </ligand>
</feature>
<feature type="binding site" evidence="1">
    <location>
        <begin position="221"/>
        <end position="224"/>
    </location>
    <ligand>
        <name>S-adenosyl-L-methionine</name>
        <dbReference type="ChEBI" id="CHEBI:59789"/>
    </ligand>
</feature>
<feature type="binding site" evidence="1">
    <location>
        <position position="240"/>
    </location>
    <ligand>
        <name>S-adenosyl-L-methionine</name>
        <dbReference type="ChEBI" id="CHEBI:59789"/>
    </ligand>
</feature>
<feature type="binding site" evidence="1">
    <location>
        <position position="260"/>
    </location>
    <ligand>
        <name>S-adenosyl-L-methionine</name>
        <dbReference type="ChEBI" id="CHEBI:59789"/>
    </ligand>
</feature>
<feature type="binding site" evidence="1">
    <location>
        <position position="277"/>
    </location>
    <ligand>
        <name>S-adenosyl-L-methionine</name>
        <dbReference type="ChEBI" id="CHEBI:59789"/>
    </ligand>
</feature>
<accession>A8GIF9</accession>
<dbReference type="EC" id="2.1.1.186" evidence="1"/>
<dbReference type="EMBL" id="CP000826">
    <property type="protein sequence ID" value="ABV42899.1"/>
    <property type="molecule type" value="Genomic_DNA"/>
</dbReference>
<dbReference type="SMR" id="A8GIF9"/>
<dbReference type="STRING" id="399741.Spro_3803"/>
<dbReference type="KEGG" id="spe:Spro_3803"/>
<dbReference type="eggNOG" id="COG2933">
    <property type="taxonomic scope" value="Bacteria"/>
</dbReference>
<dbReference type="HOGENOM" id="CLU_043780_0_0_6"/>
<dbReference type="OrthoDB" id="154490at2"/>
<dbReference type="GO" id="GO:0005737">
    <property type="term" value="C:cytoplasm"/>
    <property type="evidence" value="ECO:0007669"/>
    <property type="project" value="UniProtKB-SubCell"/>
</dbReference>
<dbReference type="GO" id="GO:0008757">
    <property type="term" value="F:S-adenosylmethionine-dependent methyltransferase activity"/>
    <property type="evidence" value="ECO:0007669"/>
    <property type="project" value="UniProtKB-UniRule"/>
</dbReference>
<dbReference type="GO" id="GO:0032259">
    <property type="term" value="P:methylation"/>
    <property type="evidence" value="ECO:0007669"/>
    <property type="project" value="UniProtKB-KW"/>
</dbReference>
<dbReference type="GO" id="GO:0006364">
    <property type="term" value="P:rRNA processing"/>
    <property type="evidence" value="ECO:0007669"/>
    <property type="project" value="UniProtKB-UniRule"/>
</dbReference>
<dbReference type="Gene3D" id="3.30.2300.20">
    <property type="match status" value="1"/>
</dbReference>
<dbReference type="Gene3D" id="3.30.70.2810">
    <property type="match status" value="1"/>
</dbReference>
<dbReference type="Gene3D" id="3.40.50.150">
    <property type="entry name" value="Vaccinia Virus protein VP39"/>
    <property type="match status" value="1"/>
</dbReference>
<dbReference type="HAMAP" id="MF_01551">
    <property type="entry name" value="23SrRNA_methyltr_M"/>
    <property type="match status" value="1"/>
</dbReference>
<dbReference type="InterPro" id="IPR040739">
    <property type="entry name" value="RlmM_FDX"/>
</dbReference>
<dbReference type="InterPro" id="IPR048646">
    <property type="entry name" value="RlmM_THUMP-like"/>
</dbReference>
<dbReference type="InterPro" id="IPR002877">
    <property type="entry name" value="RNA_MeTrfase_FtsJ_dom"/>
</dbReference>
<dbReference type="InterPro" id="IPR011224">
    <property type="entry name" value="rRNA_MeTrfase_M"/>
</dbReference>
<dbReference type="InterPro" id="IPR029063">
    <property type="entry name" value="SAM-dependent_MTases_sf"/>
</dbReference>
<dbReference type="NCBIfam" id="NF008734">
    <property type="entry name" value="PRK11760.1"/>
    <property type="match status" value="1"/>
</dbReference>
<dbReference type="PANTHER" id="PTHR37524">
    <property type="entry name" value="RIBOSOMAL RNA LARGE SUBUNIT METHYLTRANSFERASE M"/>
    <property type="match status" value="1"/>
</dbReference>
<dbReference type="PANTHER" id="PTHR37524:SF2">
    <property type="entry name" value="RIBOSOMAL RNA METHYLTRANSFERASE FTSJ DOMAIN-CONTAINING PROTEIN"/>
    <property type="match status" value="1"/>
</dbReference>
<dbReference type="Pfam" id="PF01728">
    <property type="entry name" value="FtsJ"/>
    <property type="match status" value="1"/>
</dbReference>
<dbReference type="Pfam" id="PF18125">
    <property type="entry name" value="RlmM_FDX"/>
    <property type="match status" value="1"/>
</dbReference>
<dbReference type="Pfam" id="PF21239">
    <property type="entry name" value="RLMM_N"/>
    <property type="match status" value="1"/>
</dbReference>
<dbReference type="PIRSF" id="PIRSF028774">
    <property type="entry name" value="UCP028774"/>
    <property type="match status" value="1"/>
</dbReference>
<dbReference type="SUPFAM" id="SSF53335">
    <property type="entry name" value="S-adenosyl-L-methionine-dependent methyltransferases"/>
    <property type="match status" value="1"/>
</dbReference>
<reference key="1">
    <citation type="submission" date="2007-09" db="EMBL/GenBank/DDBJ databases">
        <title>Complete sequence of chromosome of Serratia proteamaculans 568.</title>
        <authorList>
            <consortium name="US DOE Joint Genome Institute"/>
            <person name="Copeland A."/>
            <person name="Lucas S."/>
            <person name="Lapidus A."/>
            <person name="Barry K."/>
            <person name="Glavina del Rio T."/>
            <person name="Dalin E."/>
            <person name="Tice H."/>
            <person name="Pitluck S."/>
            <person name="Chain P."/>
            <person name="Malfatti S."/>
            <person name="Shin M."/>
            <person name="Vergez L."/>
            <person name="Schmutz J."/>
            <person name="Larimer F."/>
            <person name="Land M."/>
            <person name="Hauser L."/>
            <person name="Kyrpides N."/>
            <person name="Kim E."/>
            <person name="Taghavi S."/>
            <person name="Newman L."/>
            <person name="Vangronsveld J."/>
            <person name="van der Lelie D."/>
            <person name="Richardson P."/>
        </authorList>
    </citation>
    <scope>NUCLEOTIDE SEQUENCE [LARGE SCALE GENOMIC DNA]</scope>
    <source>
        <strain>568</strain>
    </source>
</reference>
<comment type="function">
    <text evidence="1">Catalyzes the 2'-O-methylation at nucleotide C2498 in 23S rRNA.</text>
</comment>
<comment type="catalytic activity">
    <reaction evidence="1">
        <text>cytidine(2498) in 23S rRNA + S-adenosyl-L-methionine = 2'-O-methylcytidine(2498) in 23S rRNA + S-adenosyl-L-homocysteine + H(+)</text>
        <dbReference type="Rhea" id="RHEA:42788"/>
        <dbReference type="Rhea" id="RHEA-COMP:10244"/>
        <dbReference type="Rhea" id="RHEA-COMP:10245"/>
        <dbReference type="ChEBI" id="CHEBI:15378"/>
        <dbReference type="ChEBI" id="CHEBI:57856"/>
        <dbReference type="ChEBI" id="CHEBI:59789"/>
        <dbReference type="ChEBI" id="CHEBI:74495"/>
        <dbReference type="ChEBI" id="CHEBI:82748"/>
        <dbReference type="EC" id="2.1.1.186"/>
    </reaction>
</comment>
<comment type="subunit">
    <text evidence="1">Monomer.</text>
</comment>
<comment type="subcellular location">
    <subcellularLocation>
        <location evidence="1">Cytoplasm</location>
    </subcellularLocation>
</comment>
<comment type="similarity">
    <text evidence="1">Belongs to the class I-like SAM-binding methyltransferase superfamily. RNA methyltransferase RlmE family. RlmM subfamily.</text>
</comment>
<gene>
    <name evidence="1" type="primary">rlmM</name>
    <name type="ordered locus">Spro_3803</name>
</gene>
<keyword id="KW-0963">Cytoplasm</keyword>
<keyword id="KW-0489">Methyltransferase</keyword>
<keyword id="KW-0698">rRNA processing</keyword>
<keyword id="KW-0949">S-adenosyl-L-methionine</keyword>
<keyword id="KW-0808">Transferase</keyword>